<accession>Q54K66</accession>
<name>PNO1_DICDI</name>
<dbReference type="EMBL" id="AAFI02000102">
    <property type="protein sequence ID" value="EAL63678.1"/>
    <property type="molecule type" value="Genomic_DNA"/>
</dbReference>
<dbReference type="RefSeq" id="XP_637189.1">
    <property type="nucleotide sequence ID" value="XM_632097.1"/>
</dbReference>
<dbReference type="SMR" id="Q54K66"/>
<dbReference type="FunCoup" id="Q54K66">
    <property type="interactions" value="539"/>
</dbReference>
<dbReference type="STRING" id="44689.Q54K66"/>
<dbReference type="PaxDb" id="44689-DDB0266405"/>
<dbReference type="EnsemblProtists" id="EAL63678">
    <property type="protein sequence ID" value="EAL63678"/>
    <property type="gene ID" value="DDB_G0287557"/>
</dbReference>
<dbReference type="GeneID" id="8626191"/>
<dbReference type="KEGG" id="ddi:DDB_G0287557"/>
<dbReference type="dictyBase" id="DDB_G0287557">
    <property type="gene designation" value="pno1"/>
</dbReference>
<dbReference type="VEuPathDB" id="AmoebaDB:DDB_G0287557"/>
<dbReference type="eggNOG" id="KOG3273">
    <property type="taxonomic scope" value="Eukaryota"/>
</dbReference>
<dbReference type="HOGENOM" id="CLU_064992_1_0_1"/>
<dbReference type="InParanoid" id="Q54K66"/>
<dbReference type="OMA" id="TPLRNNW"/>
<dbReference type="PhylomeDB" id="Q54K66"/>
<dbReference type="PRO" id="PR:Q54K66"/>
<dbReference type="Proteomes" id="UP000002195">
    <property type="component" value="Chromosome 5"/>
</dbReference>
<dbReference type="GO" id="GO:0005730">
    <property type="term" value="C:nucleolus"/>
    <property type="evidence" value="ECO:0007669"/>
    <property type="project" value="UniProtKB-SubCell"/>
</dbReference>
<dbReference type="GO" id="GO:0005634">
    <property type="term" value="C:nucleus"/>
    <property type="evidence" value="ECO:0000318"/>
    <property type="project" value="GO_Central"/>
</dbReference>
<dbReference type="GO" id="GO:0032040">
    <property type="term" value="C:small-subunit processome"/>
    <property type="evidence" value="ECO:0000250"/>
    <property type="project" value="UniProtKB"/>
</dbReference>
<dbReference type="GO" id="GO:0003723">
    <property type="term" value="F:RNA binding"/>
    <property type="evidence" value="ECO:0007669"/>
    <property type="project" value="UniProtKB-KW"/>
</dbReference>
<dbReference type="GO" id="GO:0042274">
    <property type="term" value="P:ribosomal small subunit biogenesis"/>
    <property type="evidence" value="ECO:0000250"/>
    <property type="project" value="UniProtKB"/>
</dbReference>
<dbReference type="CDD" id="cd22391">
    <property type="entry name" value="KH-I_PNO1_rpt1"/>
    <property type="match status" value="1"/>
</dbReference>
<dbReference type="CDD" id="cd22392">
    <property type="entry name" value="KH-I_PNO1_rpt2"/>
    <property type="match status" value="1"/>
</dbReference>
<dbReference type="FunFam" id="3.30.1370.10:FF:000009">
    <property type="entry name" value="RNA-binding protein PNO1"/>
    <property type="match status" value="1"/>
</dbReference>
<dbReference type="FunFam" id="3.30.1370.10:FF:000048">
    <property type="entry name" value="RNA-binding protein PNO1 isoform X2"/>
    <property type="match status" value="1"/>
</dbReference>
<dbReference type="Gene3D" id="3.30.1370.10">
    <property type="entry name" value="K Homology domain, type 1"/>
    <property type="match status" value="2"/>
</dbReference>
<dbReference type="InterPro" id="IPR055212">
    <property type="entry name" value="KH-I_PNO1_first"/>
</dbReference>
<dbReference type="InterPro" id="IPR004087">
    <property type="entry name" value="KH_dom"/>
</dbReference>
<dbReference type="InterPro" id="IPR036612">
    <property type="entry name" value="KH_dom_type_1_sf"/>
</dbReference>
<dbReference type="InterPro" id="IPR055211">
    <property type="entry name" value="KH_PNO1_2nd"/>
</dbReference>
<dbReference type="PANTHER" id="PTHR12826">
    <property type="entry name" value="RIBONUCLEASE Y"/>
    <property type="match status" value="1"/>
</dbReference>
<dbReference type="PANTHER" id="PTHR12826:SF13">
    <property type="entry name" value="RNA-BINDING PROTEIN PNO1"/>
    <property type="match status" value="1"/>
</dbReference>
<dbReference type="Pfam" id="PF22891">
    <property type="entry name" value="KH_PNO1_2nd"/>
    <property type="match status" value="1"/>
</dbReference>
<dbReference type="SMART" id="SM00322">
    <property type="entry name" value="KH"/>
    <property type="match status" value="1"/>
</dbReference>
<dbReference type="SUPFAM" id="SSF54791">
    <property type="entry name" value="Eukaryotic type KH-domain (KH-domain type I)"/>
    <property type="match status" value="1"/>
</dbReference>
<feature type="chain" id="PRO_0000327681" description="RNA-binding protein pno1">
    <location>
        <begin position="1"/>
        <end position="239"/>
    </location>
</feature>
<feature type="domain" description="KH">
    <location>
        <begin position="160"/>
        <end position="212"/>
    </location>
</feature>
<feature type="region of interest" description="Disordered" evidence="2">
    <location>
        <begin position="21"/>
        <end position="45"/>
    </location>
</feature>
<feature type="compositionally biased region" description="Basic and acidic residues" evidence="2">
    <location>
        <begin position="30"/>
        <end position="44"/>
    </location>
</feature>
<evidence type="ECO:0000250" key="1">
    <source>
        <dbReference type="UniProtKB" id="Q9NRX1"/>
    </source>
</evidence>
<evidence type="ECO:0000256" key="2">
    <source>
        <dbReference type="SAM" id="MobiDB-lite"/>
    </source>
</evidence>
<evidence type="ECO:0000305" key="3"/>
<sequence length="239" mass="26954">MTEVIETKEVENIISEQSLKTESVKVSNKRSRDDEEMKDSEGGVKKTSFPQISVEDTEEEQIRKVTIPFNRIAPLKANWQQIYEPIVTHLKLQIRMNTKTRKVELKTSKSTKETSALQKAADFVHAFSLGFEVNDAVAILRLDDLYIDSFDVEDVKILKGDNLSRAIGRVAGKDGKTKFTIENVTKTRIVLADKRIHILGSYSNIRVAKDAICDLIIGSPPGKVYAKLRTVSSRIAERF</sequence>
<keyword id="KW-0539">Nucleus</keyword>
<keyword id="KW-1185">Reference proteome</keyword>
<keyword id="KW-0694">RNA-binding</keyword>
<proteinExistence type="inferred from homology"/>
<comment type="function">
    <text evidence="1">Part of the small subunit (SSU) processome, first precursor of the small eukaryotic ribosomal subunit. During the assembly of the SSU processome in the nucleolus, many ribosome biogenesis factors, an RNA chaperone and ribosomal proteins associate with the nascent pre-rRNA and work in concert to generate RNA folding, modifications, rearrangements and cleavage as well as targeted degradation of pre-ribosomal RNA by the RNA exosome. Positively regulates dimethylation of two adjacent adenosines in the loop of a conserved hairpin near the 3'-end of 18S rRNA.</text>
</comment>
<comment type="subunit">
    <text evidence="1">Part of the small subunit (SSU) processome, composed of more than 70 proteins and the RNA chaperone small nucleolar RNA (snoRNA) U3.</text>
</comment>
<comment type="subcellular location">
    <subcellularLocation>
        <location evidence="1">Nucleus</location>
        <location evidence="1">Nucleolus</location>
    </subcellularLocation>
</comment>
<comment type="similarity">
    <text evidence="3">Belongs to the PNO1 family.</text>
</comment>
<organism>
    <name type="scientific">Dictyostelium discoideum</name>
    <name type="common">Social amoeba</name>
    <dbReference type="NCBI Taxonomy" id="44689"/>
    <lineage>
        <taxon>Eukaryota</taxon>
        <taxon>Amoebozoa</taxon>
        <taxon>Evosea</taxon>
        <taxon>Eumycetozoa</taxon>
        <taxon>Dictyostelia</taxon>
        <taxon>Dictyosteliales</taxon>
        <taxon>Dictyosteliaceae</taxon>
        <taxon>Dictyostelium</taxon>
    </lineage>
</organism>
<reference key="1">
    <citation type="journal article" date="2005" name="Nature">
        <title>The genome of the social amoeba Dictyostelium discoideum.</title>
        <authorList>
            <person name="Eichinger L."/>
            <person name="Pachebat J.A."/>
            <person name="Gloeckner G."/>
            <person name="Rajandream M.A."/>
            <person name="Sucgang R."/>
            <person name="Berriman M."/>
            <person name="Song J."/>
            <person name="Olsen R."/>
            <person name="Szafranski K."/>
            <person name="Xu Q."/>
            <person name="Tunggal B."/>
            <person name="Kummerfeld S."/>
            <person name="Madera M."/>
            <person name="Konfortov B.A."/>
            <person name="Rivero F."/>
            <person name="Bankier A.T."/>
            <person name="Lehmann R."/>
            <person name="Hamlin N."/>
            <person name="Davies R."/>
            <person name="Gaudet P."/>
            <person name="Fey P."/>
            <person name="Pilcher K."/>
            <person name="Chen G."/>
            <person name="Saunders D."/>
            <person name="Sodergren E.J."/>
            <person name="Davis P."/>
            <person name="Kerhornou A."/>
            <person name="Nie X."/>
            <person name="Hall N."/>
            <person name="Anjard C."/>
            <person name="Hemphill L."/>
            <person name="Bason N."/>
            <person name="Farbrother P."/>
            <person name="Desany B."/>
            <person name="Just E."/>
            <person name="Morio T."/>
            <person name="Rost R."/>
            <person name="Churcher C.M."/>
            <person name="Cooper J."/>
            <person name="Haydock S."/>
            <person name="van Driessche N."/>
            <person name="Cronin A."/>
            <person name="Goodhead I."/>
            <person name="Muzny D.M."/>
            <person name="Mourier T."/>
            <person name="Pain A."/>
            <person name="Lu M."/>
            <person name="Harper D."/>
            <person name="Lindsay R."/>
            <person name="Hauser H."/>
            <person name="James K.D."/>
            <person name="Quiles M."/>
            <person name="Madan Babu M."/>
            <person name="Saito T."/>
            <person name="Buchrieser C."/>
            <person name="Wardroper A."/>
            <person name="Felder M."/>
            <person name="Thangavelu M."/>
            <person name="Johnson D."/>
            <person name="Knights A."/>
            <person name="Loulseged H."/>
            <person name="Mungall K.L."/>
            <person name="Oliver K."/>
            <person name="Price C."/>
            <person name="Quail M.A."/>
            <person name="Urushihara H."/>
            <person name="Hernandez J."/>
            <person name="Rabbinowitsch E."/>
            <person name="Steffen D."/>
            <person name="Sanders M."/>
            <person name="Ma J."/>
            <person name="Kohara Y."/>
            <person name="Sharp S."/>
            <person name="Simmonds M.N."/>
            <person name="Spiegler S."/>
            <person name="Tivey A."/>
            <person name="Sugano S."/>
            <person name="White B."/>
            <person name="Walker D."/>
            <person name="Woodward J.R."/>
            <person name="Winckler T."/>
            <person name="Tanaka Y."/>
            <person name="Shaulsky G."/>
            <person name="Schleicher M."/>
            <person name="Weinstock G.M."/>
            <person name="Rosenthal A."/>
            <person name="Cox E.C."/>
            <person name="Chisholm R.L."/>
            <person name="Gibbs R.A."/>
            <person name="Loomis W.F."/>
            <person name="Platzer M."/>
            <person name="Kay R.R."/>
            <person name="Williams J.G."/>
            <person name="Dear P.H."/>
            <person name="Noegel A.A."/>
            <person name="Barrell B.G."/>
            <person name="Kuspa A."/>
        </authorList>
    </citation>
    <scope>NUCLEOTIDE SEQUENCE [LARGE SCALE GENOMIC DNA]</scope>
    <source>
        <strain>AX4</strain>
    </source>
</reference>
<gene>
    <name type="primary">pno1</name>
    <name type="ORF">DDB_G0287557</name>
</gene>
<protein>
    <recommendedName>
        <fullName>RNA-binding protein pno1</fullName>
    </recommendedName>
</protein>